<name>MRAZ_LACP7</name>
<sequence>MFMGEYNHIIDAKGRIIVPSKFRDSLGEHFVVTVGLDGCLFVYPNEEWQHFVEQLKNLPGNKEARQLQRYFMAGAADCEVDKQGRILIPGNLRQHAGLDKDIVFVGVLSKIEIWSKERWESNSYDNMDEIADHMSEFGLSF</sequence>
<reference key="1">
    <citation type="submission" date="2007-11" db="EMBL/GenBank/DDBJ databases">
        <title>Complete genome sequence of Clostridium phytofermentans ISDg.</title>
        <authorList>
            <person name="Leschine S.B."/>
            <person name="Warnick T.A."/>
            <person name="Blanchard J.L."/>
            <person name="Schnell D.J."/>
            <person name="Petit E.L."/>
            <person name="LaTouf W.G."/>
            <person name="Copeland A."/>
            <person name="Lucas S."/>
            <person name="Lapidus A."/>
            <person name="Barry K."/>
            <person name="Glavina del Rio T."/>
            <person name="Dalin E."/>
            <person name="Tice H."/>
            <person name="Pitluck S."/>
            <person name="Kiss H."/>
            <person name="Brettin T."/>
            <person name="Bruce D."/>
            <person name="Detter J.C."/>
            <person name="Han C."/>
            <person name="Kuske C."/>
            <person name="Schmutz J."/>
            <person name="Larimer F."/>
            <person name="Land M."/>
            <person name="Hauser L."/>
            <person name="Kyrpides N."/>
            <person name="Kim E.A."/>
            <person name="Richardson P."/>
        </authorList>
    </citation>
    <scope>NUCLEOTIDE SEQUENCE [LARGE SCALE GENOMIC DNA]</scope>
    <source>
        <strain>ATCC 700394 / DSM 18823 / ISDg</strain>
    </source>
</reference>
<feature type="chain" id="PRO_1000084000" description="Transcriptional regulator MraZ">
    <location>
        <begin position="1"/>
        <end position="141"/>
    </location>
</feature>
<feature type="domain" description="SpoVT-AbrB 1" evidence="2">
    <location>
        <begin position="5"/>
        <end position="47"/>
    </location>
</feature>
<feature type="domain" description="SpoVT-AbrB 2" evidence="2">
    <location>
        <begin position="75"/>
        <end position="118"/>
    </location>
</feature>
<organism>
    <name type="scientific">Lachnoclostridium phytofermentans (strain ATCC 700394 / DSM 18823 / ISDg)</name>
    <name type="common">Clostridium phytofermentans</name>
    <dbReference type="NCBI Taxonomy" id="357809"/>
    <lineage>
        <taxon>Bacteria</taxon>
        <taxon>Bacillati</taxon>
        <taxon>Bacillota</taxon>
        <taxon>Clostridia</taxon>
        <taxon>Lachnospirales</taxon>
        <taxon>Lachnospiraceae</taxon>
    </lineage>
</organism>
<proteinExistence type="inferred from homology"/>
<accession>A9KM87</accession>
<gene>
    <name evidence="1" type="primary">mraZ</name>
    <name type="ordered locus">Cphy_2480</name>
</gene>
<protein>
    <recommendedName>
        <fullName>Transcriptional regulator MraZ</fullName>
    </recommendedName>
</protein>
<keyword id="KW-0963">Cytoplasm</keyword>
<keyword id="KW-0238">DNA-binding</keyword>
<keyword id="KW-1185">Reference proteome</keyword>
<keyword id="KW-0677">Repeat</keyword>
<keyword id="KW-0804">Transcription</keyword>
<keyword id="KW-0805">Transcription regulation</keyword>
<dbReference type="EMBL" id="CP000885">
    <property type="protein sequence ID" value="ABX42841.1"/>
    <property type="molecule type" value="Genomic_DNA"/>
</dbReference>
<dbReference type="RefSeq" id="WP_012200494.1">
    <property type="nucleotide sequence ID" value="NC_010001.1"/>
</dbReference>
<dbReference type="SMR" id="A9KM87"/>
<dbReference type="STRING" id="357809.Cphy_2480"/>
<dbReference type="KEGG" id="cpy:Cphy_2480"/>
<dbReference type="eggNOG" id="COG2001">
    <property type="taxonomic scope" value="Bacteria"/>
</dbReference>
<dbReference type="HOGENOM" id="CLU_107907_0_0_9"/>
<dbReference type="OrthoDB" id="9807753at2"/>
<dbReference type="Proteomes" id="UP000000370">
    <property type="component" value="Chromosome"/>
</dbReference>
<dbReference type="GO" id="GO:0005737">
    <property type="term" value="C:cytoplasm"/>
    <property type="evidence" value="ECO:0007669"/>
    <property type="project" value="UniProtKB-UniRule"/>
</dbReference>
<dbReference type="GO" id="GO:0009295">
    <property type="term" value="C:nucleoid"/>
    <property type="evidence" value="ECO:0007669"/>
    <property type="project" value="UniProtKB-SubCell"/>
</dbReference>
<dbReference type="GO" id="GO:0003700">
    <property type="term" value="F:DNA-binding transcription factor activity"/>
    <property type="evidence" value="ECO:0007669"/>
    <property type="project" value="UniProtKB-UniRule"/>
</dbReference>
<dbReference type="GO" id="GO:0000976">
    <property type="term" value="F:transcription cis-regulatory region binding"/>
    <property type="evidence" value="ECO:0007669"/>
    <property type="project" value="TreeGrafter"/>
</dbReference>
<dbReference type="GO" id="GO:2000143">
    <property type="term" value="P:negative regulation of DNA-templated transcription initiation"/>
    <property type="evidence" value="ECO:0007669"/>
    <property type="project" value="TreeGrafter"/>
</dbReference>
<dbReference type="CDD" id="cd16321">
    <property type="entry name" value="MraZ_C"/>
    <property type="match status" value="1"/>
</dbReference>
<dbReference type="CDD" id="cd16320">
    <property type="entry name" value="MraZ_N"/>
    <property type="match status" value="1"/>
</dbReference>
<dbReference type="FunFam" id="3.40.1550.20:FF:000002">
    <property type="entry name" value="Transcriptional regulator MraZ"/>
    <property type="match status" value="1"/>
</dbReference>
<dbReference type="Gene3D" id="3.40.1550.20">
    <property type="entry name" value="Transcriptional regulator MraZ domain"/>
    <property type="match status" value="1"/>
</dbReference>
<dbReference type="HAMAP" id="MF_01008">
    <property type="entry name" value="MraZ"/>
    <property type="match status" value="1"/>
</dbReference>
<dbReference type="InterPro" id="IPR003444">
    <property type="entry name" value="MraZ"/>
</dbReference>
<dbReference type="InterPro" id="IPR035644">
    <property type="entry name" value="MraZ_C"/>
</dbReference>
<dbReference type="InterPro" id="IPR020603">
    <property type="entry name" value="MraZ_dom"/>
</dbReference>
<dbReference type="InterPro" id="IPR035642">
    <property type="entry name" value="MraZ_N"/>
</dbReference>
<dbReference type="InterPro" id="IPR038619">
    <property type="entry name" value="MraZ_sf"/>
</dbReference>
<dbReference type="InterPro" id="IPR007159">
    <property type="entry name" value="SpoVT-AbrB_dom"/>
</dbReference>
<dbReference type="InterPro" id="IPR037914">
    <property type="entry name" value="SpoVT-AbrB_sf"/>
</dbReference>
<dbReference type="NCBIfam" id="TIGR00242">
    <property type="entry name" value="division/cell wall cluster transcriptional repressor MraZ"/>
    <property type="match status" value="1"/>
</dbReference>
<dbReference type="PANTHER" id="PTHR34701">
    <property type="entry name" value="TRANSCRIPTIONAL REGULATOR MRAZ"/>
    <property type="match status" value="1"/>
</dbReference>
<dbReference type="PANTHER" id="PTHR34701:SF1">
    <property type="entry name" value="TRANSCRIPTIONAL REGULATOR MRAZ"/>
    <property type="match status" value="1"/>
</dbReference>
<dbReference type="Pfam" id="PF02381">
    <property type="entry name" value="MraZ"/>
    <property type="match status" value="2"/>
</dbReference>
<dbReference type="SUPFAM" id="SSF89447">
    <property type="entry name" value="AbrB/MazE/MraZ-like"/>
    <property type="match status" value="1"/>
</dbReference>
<dbReference type="PROSITE" id="PS51740">
    <property type="entry name" value="SPOVT_ABRB"/>
    <property type="match status" value="2"/>
</dbReference>
<evidence type="ECO:0000255" key="1">
    <source>
        <dbReference type="HAMAP-Rule" id="MF_01008"/>
    </source>
</evidence>
<evidence type="ECO:0000255" key="2">
    <source>
        <dbReference type="PROSITE-ProRule" id="PRU01076"/>
    </source>
</evidence>
<comment type="subunit">
    <text evidence="1">Forms oligomers.</text>
</comment>
<comment type="subcellular location">
    <subcellularLocation>
        <location evidence="1">Cytoplasm</location>
        <location evidence="1">Nucleoid</location>
    </subcellularLocation>
</comment>
<comment type="similarity">
    <text evidence="1">Belongs to the MraZ family.</text>
</comment>